<gene>
    <name evidence="1" type="primary">tig</name>
    <name type="ordered locus">MS1849</name>
</gene>
<comment type="function">
    <text evidence="1">Involved in protein export. Acts as a chaperone by maintaining the newly synthesized protein in an open conformation. Functions as a peptidyl-prolyl cis-trans isomerase.</text>
</comment>
<comment type="catalytic activity">
    <reaction evidence="1">
        <text>[protein]-peptidylproline (omega=180) = [protein]-peptidylproline (omega=0)</text>
        <dbReference type="Rhea" id="RHEA:16237"/>
        <dbReference type="Rhea" id="RHEA-COMP:10747"/>
        <dbReference type="Rhea" id="RHEA-COMP:10748"/>
        <dbReference type="ChEBI" id="CHEBI:83833"/>
        <dbReference type="ChEBI" id="CHEBI:83834"/>
        <dbReference type="EC" id="5.2.1.8"/>
    </reaction>
</comment>
<comment type="subcellular location">
    <subcellularLocation>
        <location>Cytoplasm</location>
    </subcellularLocation>
    <text evidence="1">About half TF is bound to the ribosome near the polypeptide exit tunnel while the other half is free in the cytoplasm.</text>
</comment>
<comment type="domain">
    <text evidence="1">Consists of 3 domains; the N-terminus binds the ribosome, the middle domain has PPIase activity, while the C-terminus has intrinsic chaperone activity on its own.</text>
</comment>
<comment type="similarity">
    <text evidence="1">Belongs to the FKBP-type PPIase family. Tig subfamily.</text>
</comment>
<comment type="sequence caution" evidence="2">
    <conflict type="erroneous initiation">
        <sequence resource="EMBL-CDS" id="AAU38456"/>
    </conflict>
</comment>
<protein>
    <recommendedName>
        <fullName evidence="1">Trigger factor</fullName>
        <shortName evidence="1">TF</shortName>
        <ecNumber evidence="1">5.2.1.8</ecNumber>
    </recommendedName>
    <alternativeName>
        <fullName evidence="1">PPIase</fullName>
    </alternativeName>
</protein>
<evidence type="ECO:0000255" key="1">
    <source>
        <dbReference type="HAMAP-Rule" id="MF_00303"/>
    </source>
</evidence>
<evidence type="ECO:0000305" key="2"/>
<accession>Q65RF4</accession>
<sequence>MTTIETTQGLERRVSITVPAETVTTAVRDELKRVAKNARVDGFRKGKVPAQIIEKRFGASVRQDVLNDLLPRHFFDLAFKEKVNLAGRPTFAVENYEEGKDLQFTATFEVYPEIQLQGLENIKVEKPVVEITDADVDNMVEVLRKQQATWAETDNAATKDDRVTIDFVGSIDGEEFQGGKANDFVLAMGQGRMIPGFEDGILGHKAGEQFDIEVTFPEDYHVENLKAKPAKFAITVKKVEVMVLPELTADFIAKFGPNTKTVDDLRAEIRKNMQRELKNALTARVKNQVIDGLIEQNQIDVPFAAVDQEIEVLRNQAAQRFGGNGEQAAQLPRELFEEQAKRRVQVGLLLAEVISSNELKADEEKAKAMIEDIASAYEQPAEVVEYYSKNNELMNNIRNVVLEEQAIDAVLAKAQVTEKASSFDEVMNPQA</sequence>
<reference key="1">
    <citation type="journal article" date="2004" name="Nat. Biotechnol.">
        <title>The genome sequence of the capnophilic rumen bacterium Mannheimia succiniciproducens.</title>
        <authorList>
            <person name="Hong S.H."/>
            <person name="Kim J.S."/>
            <person name="Lee S.Y."/>
            <person name="In Y.H."/>
            <person name="Choi S.S."/>
            <person name="Rih J.-K."/>
            <person name="Kim C.H."/>
            <person name="Jeong H."/>
            <person name="Hur C.G."/>
            <person name="Kim J.J."/>
        </authorList>
    </citation>
    <scope>NUCLEOTIDE SEQUENCE [LARGE SCALE GENOMIC DNA]</scope>
    <source>
        <strain>KCTC 0769BP / MBEL55E</strain>
    </source>
</reference>
<dbReference type="EC" id="5.2.1.8" evidence="1"/>
<dbReference type="EMBL" id="AE016827">
    <property type="protein sequence ID" value="AAU38456.1"/>
    <property type="status" value="ALT_INIT"/>
    <property type="molecule type" value="Genomic_DNA"/>
</dbReference>
<dbReference type="RefSeq" id="WP_041639989.1">
    <property type="nucleotide sequence ID" value="NC_006300.1"/>
</dbReference>
<dbReference type="SMR" id="Q65RF4"/>
<dbReference type="STRING" id="221988.MS1849"/>
<dbReference type="KEGG" id="msu:MS1849"/>
<dbReference type="eggNOG" id="COG0544">
    <property type="taxonomic scope" value="Bacteria"/>
</dbReference>
<dbReference type="HOGENOM" id="CLU_033058_2_0_6"/>
<dbReference type="OrthoDB" id="9767721at2"/>
<dbReference type="Proteomes" id="UP000000607">
    <property type="component" value="Chromosome"/>
</dbReference>
<dbReference type="GO" id="GO:0005737">
    <property type="term" value="C:cytoplasm"/>
    <property type="evidence" value="ECO:0007669"/>
    <property type="project" value="UniProtKB-SubCell"/>
</dbReference>
<dbReference type="GO" id="GO:0003755">
    <property type="term" value="F:peptidyl-prolyl cis-trans isomerase activity"/>
    <property type="evidence" value="ECO:0007669"/>
    <property type="project" value="UniProtKB-UniRule"/>
</dbReference>
<dbReference type="GO" id="GO:0044183">
    <property type="term" value="F:protein folding chaperone"/>
    <property type="evidence" value="ECO:0007669"/>
    <property type="project" value="TreeGrafter"/>
</dbReference>
<dbReference type="GO" id="GO:0043022">
    <property type="term" value="F:ribosome binding"/>
    <property type="evidence" value="ECO:0007669"/>
    <property type="project" value="TreeGrafter"/>
</dbReference>
<dbReference type="GO" id="GO:0051083">
    <property type="term" value="P:'de novo' cotranslational protein folding"/>
    <property type="evidence" value="ECO:0007669"/>
    <property type="project" value="TreeGrafter"/>
</dbReference>
<dbReference type="GO" id="GO:0051301">
    <property type="term" value="P:cell division"/>
    <property type="evidence" value="ECO:0007669"/>
    <property type="project" value="UniProtKB-KW"/>
</dbReference>
<dbReference type="GO" id="GO:0061077">
    <property type="term" value="P:chaperone-mediated protein folding"/>
    <property type="evidence" value="ECO:0007669"/>
    <property type="project" value="TreeGrafter"/>
</dbReference>
<dbReference type="GO" id="GO:0015031">
    <property type="term" value="P:protein transport"/>
    <property type="evidence" value="ECO:0007669"/>
    <property type="project" value="UniProtKB-UniRule"/>
</dbReference>
<dbReference type="GO" id="GO:0043335">
    <property type="term" value="P:protein unfolding"/>
    <property type="evidence" value="ECO:0007669"/>
    <property type="project" value="TreeGrafter"/>
</dbReference>
<dbReference type="FunFam" id="3.10.50.40:FF:000001">
    <property type="entry name" value="Trigger factor"/>
    <property type="match status" value="1"/>
</dbReference>
<dbReference type="Gene3D" id="3.10.50.40">
    <property type="match status" value="1"/>
</dbReference>
<dbReference type="Gene3D" id="3.30.70.1050">
    <property type="entry name" value="Trigger factor ribosome-binding domain"/>
    <property type="match status" value="1"/>
</dbReference>
<dbReference type="Gene3D" id="1.10.3120.10">
    <property type="entry name" value="Trigger factor, C-terminal domain"/>
    <property type="match status" value="1"/>
</dbReference>
<dbReference type="HAMAP" id="MF_00303">
    <property type="entry name" value="Trigger_factor_Tig"/>
    <property type="match status" value="1"/>
</dbReference>
<dbReference type="InterPro" id="IPR046357">
    <property type="entry name" value="PPIase_dom_sf"/>
</dbReference>
<dbReference type="InterPro" id="IPR001179">
    <property type="entry name" value="PPIase_FKBP_dom"/>
</dbReference>
<dbReference type="InterPro" id="IPR005215">
    <property type="entry name" value="Trig_fac"/>
</dbReference>
<dbReference type="InterPro" id="IPR008880">
    <property type="entry name" value="Trigger_fac_C"/>
</dbReference>
<dbReference type="InterPro" id="IPR037041">
    <property type="entry name" value="Trigger_fac_C_sf"/>
</dbReference>
<dbReference type="InterPro" id="IPR008881">
    <property type="entry name" value="Trigger_fac_ribosome-bd_bac"/>
</dbReference>
<dbReference type="InterPro" id="IPR036611">
    <property type="entry name" value="Trigger_fac_ribosome-bd_sf"/>
</dbReference>
<dbReference type="InterPro" id="IPR027304">
    <property type="entry name" value="Trigger_fact/SurA_dom_sf"/>
</dbReference>
<dbReference type="NCBIfam" id="TIGR00115">
    <property type="entry name" value="tig"/>
    <property type="match status" value="1"/>
</dbReference>
<dbReference type="PANTHER" id="PTHR30560">
    <property type="entry name" value="TRIGGER FACTOR CHAPERONE AND PEPTIDYL-PROLYL CIS/TRANS ISOMERASE"/>
    <property type="match status" value="1"/>
</dbReference>
<dbReference type="PANTHER" id="PTHR30560:SF3">
    <property type="entry name" value="TRIGGER FACTOR-LIKE PROTEIN TIG, CHLOROPLASTIC"/>
    <property type="match status" value="1"/>
</dbReference>
<dbReference type="Pfam" id="PF00254">
    <property type="entry name" value="FKBP_C"/>
    <property type="match status" value="1"/>
</dbReference>
<dbReference type="Pfam" id="PF05698">
    <property type="entry name" value="Trigger_C"/>
    <property type="match status" value="1"/>
</dbReference>
<dbReference type="Pfam" id="PF05697">
    <property type="entry name" value="Trigger_N"/>
    <property type="match status" value="1"/>
</dbReference>
<dbReference type="PIRSF" id="PIRSF003095">
    <property type="entry name" value="Trigger_factor"/>
    <property type="match status" value="1"/>
</dbReference>
<dbReference type="SUPFAM" id="SSF54534">
    <property type="entry name" value="FKBP-like"/>
    <property type="match status" value="1"/>
</dbReference>
<dbReference type="SUPFAM" id="SSF109998">
    <property type="entry name" value="Triger factor/SurA peptide-binding domain-like"/>
    <property type="match status" value="1"/>
</dbReference>
<dbReference type="SUPFAM" id="SSF102735">
    <property type="entry name" value="Trigger factor ribosome-binding domain"/>
    <property type="match status" value="1"/>
</dbReference>
<dbReference type="PROSITE" id="PS50059">
    <property type="entry name" value="FKBP_PPIASE"/>
    <property type="match status" value="1"/>
</dbReference>
<keyword id="KW-0131">Cell cycle</keyword>
<keyword id="KW-0132">Cell division</keyword>
<keyword id="KW-0143">Chaperone</keyword>
<keyword id="KW-0963">Cytoplasm</keyword>
<keyword id="KW-0413">Isomerase</keyword>
<keyword id="KW-0697">Rotamase</keyword>
<proteinExistence type="inferred from homology"/>
<feature type="chain" id="PRO_0000179378" description="Trigger factor">
    <location>
        <begin position="1"/>
        <end position="431"/>
    </location>
</feature>
<feature type="domain" description="PPIase FKBP-type" evidence="1">
    <location>
        <begin position="160"/>
        <end position="245"/>
    </location>
</feature>
<name>TIG_MANSM</name>
<organism>
    <name type="scientific">Mannheimia succiniciproducens (strain KCTC 0769BP / MBEL55E)</name>
    <dbReference type="NCBI Taxonomy" id="221988"/>
    <lineage>
        <taxon>Bacteria</taxon>
        <taxon>Pseudomonadati</taxon>
        <taxon>Pseudomonadota</taxon>
        <taxon>Gammaproteobacteria</taxon>
        <taxon>Pasteurellales</taxon>
        <taxon>Pasteurellaceae</taxon>
        <taxon>Basfia</taxon>
    </lineage>
</organism>